<organism>
    <name type="scientific">Oryza sativa subsp. japonica</name>
    <name type="common">Rice</name>
    <dbReference type="NCBI Taxonomy" id="39947"/>
    <lineage>
        <taxon>Eukaryota</taxon>
        <taxon>Viridiplantae</taxon>
        <taxon>Streptophyta</taxon>
        <taxon>Embryophyta</taxon>
        <taxon>Tracheophyta</taxon>
        <taxon>Spermatophyta</taxon>
        <taxon>Magnoliopsida</taxon>
        <taxon>Liliopsida</taxon>
        <taxon>Poales</taxon>
        <taxon>Poaceae</taxon>
        <taxon>BOP clade</taxon>
        <taxon>Oryzoideae</taxon>
        <taxon>Oryzeae</taxon>
        <taxon>Oryzinae</taxon>
        <taxon>Oryza</taxon>
        <taxon>Oryza sativa</taxon>
    </lineage>
</organism>
<evidence type="ECO:0000255" key="1">
    <source>
        <dbReference type="PROSITE-ProRule" id="PRU00625"/>
    </source>
</evidence>
<evidence type="ECO:0000256" key="2">
    <source>
        <dbReference type="SAM" id="MobiDB-lite"/>
    </source>
</evidence>
<evidence type="ECO:0000269" key="3">
    <source>
    </source>
</evidence>
<evidence type="ECO:0000269" key="4">
    <source>
    </source>
</evidence>
<evidence type="ECO:0000303" key="5">
    <source>
    </source>
</evidence>
<evidence type="ECO:0000305" key="6"/>
<evidence type="ECO:0000312" key="7">
    <source>
        <dbReference type="EMBL" id="BAD81105.1"/>
    </source>
</evidence>
<evidence type="ECO:0000312" key="8">
    <source>
        <dbReference type="EMBL" id="BAD81128.1"/>
    </source>
</evidence>
<evidence type="ECO:0000312" key="9">
    <source>
        <dbReference type="EMBL" id="BAS71534.1"/>
    </source>
</evidence>
<keyword id="KW-0238">DNA-binding</keyword>
<keyword id="KW-0539">Nucleus</keyword>
<keyword id="KW-1185">Reference proteome</keyword>
<keyword id="KW-0677">Repeat</keyword>
<keyword id="KW-0804">Transcription</keyword>
<keyword id="KW-0805">Transcription regulation</keyword>
<accession>Q5NBM8</accession>
<accession>Q0JNP4</accession>
<reference key="1">
    <citation type="journal article" date="2002" name="Nature">
        <title>The genome sequence and structure of rice chromosome 1.</title>
        <authorList>
            <person name="Sasaki T."/>
            <person name="Matsumoto T."/>
            <person name="Yamamoto K."/>
            <person name="Sakata K."/>
            <person name="Baba T."/>
            <person name="Katayose Y."/>
            <person name="Wu J."/>
            <person name="Niimura Y."/>
            <person name="Cheng Z."/>
            <person name="Nagamura Y."/>
            <person name="Antonio B.A."/>
            <person name="Kanamori H."/>
            <person name="Hosokawa S."/>
            <person name="Masukawa M."/>
            <person name="Arikawa K."/>
            <person name="Chiden Y."/>
            <person name="Hayashi M."/>
            <person name="Okamoto M."/>
            <person name="Ando T."/>
            <person name="Aoki H."/>
            <person name="Arita K."/>
            <person name="Hamada M."/>
            <person name="Harada C."/>
            <person name="Hijishita S."/>
            <person name="Honda M."/>
            <person name="Ichikawa Y."/>
            <person name="Idonuma A."/>
            <person name="Iijima M."/>
            <person name="Ikeda M."/>
            <person name="Ikeno M."/>
            <person name="Ito S."/>
            <person name="Ito T."/>
            <person name="Ito Y."/>
            <person name="Ito Y."/>
            <person name="Iwabuchi A."/>
            <person name="Kamiya K."/>
            <person name="Karasawa W."/>
            <person name="Katagiri S."/>
            <person name="Kikuta A."/>
            <person name="Kobayashi N."/>
            <person name="Kono I."/>
            <person name="Machita K."/>
            <person name="Maehara T."/>
            <person name="Mizuno H."/>
            <person name="Mizubayashi T."/>
            <person name="Mukai Y."/>
            <person name="Nagasaki H."/>
            <person name="Nakashima M."/>
            <person name="Nakama Y."/>
            <person name="Nakamichi Y."/>
            <person name="Nakamura M."/>
            <person name="Namiki N."/>
            <person name="Negishi M."/>
            <person name="Ohta I."/>
            <person name="Ono N."/>
            <person name="Saji S."/>
            <person name="Sakai K."/>
            <person name="Shibata M."/>
            <person name="Shimokawa T."/>
            <person name="Shomura A."/>
            <person name="Song J."/>
            <person name="Takazaki Y."/>
            <person name="Terasawa K."/>
            <person name="Tsuji K."/>
            <person name="Waki K."/>
            <person name="Yamagata H."/>
            <person name="Yamane H."/>
            <person name="Yoshiki S."/>
            <person name="Yoshihara R."/>
            <person name="Yukawa K."/>
            <person name="Zhong H."/>
            <person name="Iwama H."/>
            <person name="Endo T."/>
            <person name="Ito H."/>
            <person name="Hahn J.H."/>
            <person name="Kim H.-I."/>
            <person name="Eun M.-Y."/>
            <person name="Yano M."/>
            <person name="Jiang J."/>
            <person name="Gojobori T."/>
        </authorList>
    </citation>
    <scope>NUCLEOTIDE SEQUENCE [LARGE SCALE GENOMIC DNA]</scope>
    <source>
        <strain>cv. Nipponbare</strain>
    </source>
</reference>
<reference key="2">
    <citation type="journal article" date="2005" name="Nature">
        <title>The map-based sequence of the rice genome.</title>
        <authorList>
            <consortium name="International rice genome sequencing project (IRGSP)"/>
        </authorList>
    </citation>
    <scope>NUCLEOTIDE SEQUENCE [LARGE SCALE GENOMIC DNA]</scope>
    <source>
        <strain>cv. Nipponbare</strain>
    </source>
</reference>
<reference key="3">
    <citation type="journal article" date="2008" name="Nucleic Acids Res.">
        <title>The rice annotation project database (RAP-DB): 2008 update.</title>
        <authorList>
            <consortium name="The rice annotation project (RAP)"/>
        </authorList>
    </citation>
    <scope>GENOME REANNOTATION</scope>
    <source>
        <strain>cv. Nipponbare</strain>
    </source>
</reference>
<reference key="4">
    <citation type="journal article" date="2013" name="Rice">
        <title>Improvement of the Oryza sativa Nipponbare reference genome using next generation sequence and optical map data.</title>
        <authorList>
            <person name="Kawahara Y."/>
            <person name="de la Bastide M."/>
            <person name="Hamilton J.P."/>
            <person name="Kanamori H."/>
            <person name="McCombie W.R."/>
            <person name="Ouyang S."/>
            <person name="Schwartz D.C."/>
            <person name="Tanaka T."/>
            <person name="Wu J."/>
            <person name="Zhou S."/>
            <person name="Childs K.L."/>
            <person name="Davidson R.M."/>
            <person name="Lin H."/>
            <person name="Quesada-Ocampo L."/>
            <person name="Vaillancourt B."/>
            <person name="Sakai H."/>
            <person name="Lee S.S."/>
            <person name="Kim J."/>
            <person name="Numa H."/>
            <person name="Itoh T."/>
            <person name="Buell C.R."/>
            <person name="Matsumoto T."/>
        </authorList>
    </citation>
    <scope>GENOME REANNOTATION</scope>
    <source>
        <strain>cv. Nipponbare</strain>
    </source>
</reference>
<reference key="5">
    <citation type="journal article" date="2010" name="Plant Cell">
        <title>Carbon starved anther encodes a MYB domain protein that regulates sugar partitioning required for rice pollen development.</title>
        <authorList>
            <person name="Zhang H."/>
            <person name="Liang W."/>
            <person name="Yang X."/>
            <person name="Luo X."/>
            <person name="Jiang N."/>
            <person name="Ma H."/>
            <person name="Zhang D."/>
        </authorList>
    </citation>
    <scope>FUNCTION</scope>
    <scope>SUBCELLULAR LOCATION</scope>
    <scope>INDUCTION BY WOUNDING</scope>
    <scope>DEVELOPMENTAL STAGE</scope>
    <scope>DISRUPTION PHENOTYPE</scope>
</reference>
<reference key="6">
    <citation type="journal article" date="2013" name="Proc. Natl. Acad. Sci. U.S.A.">
        <title>Mutation in CSA creates a new photoperiod-sensitive genic male sterile line applicable for hybrid rice seed production.</title>
        <authorList>
            <person name="Zhang H."/>
            <person name="Xu C."/>
            <person name="He Y."/>
            <person name="Zong J."/>
            <person name="Yang X."/>
            <person name="Si H."/>
            <person name="Sun Z."/>
            <person name="Hu J."/>
            <person name="Liang W."/>
            <person name="Zhang D."/>
        </authorList>
    </citation>
    <scope>DISRUPTION PHENOTYPE</scope>
</reference>
<dbReference type="EMBL" id="AP000836">
    <property type="protein sequence ID" value="BAD81105.1"/>
    <property type="status" value="ALT_SEQ"/>
    <property type="molecule type" value="Genomic_DNA"/>
</dbReference>
<dbReference type="EMBL" id="AP000837">
    <property type="protein sequence ID" value="BAD81128.1"/>
    <property type="status" value="ALT_SEQ"/>
    <property type="molecule type" value="Genomic_DNA"/>
</dbReference>
<dbReference type="EMBL" id="AP008207">
    <property type="protein sequence ID" value="BAF04634.1"/>
    <property type="status" value="ALT_SEQ"/>
    <property type="molecule type" value="Genomic_DNA"/>
</dbReference>
<dbReference type="EMBL" id="AP014957">
    <property type="protein sequence ID" value="BAS71534.1"/>
    <property type="status" value="ALT_SEQ"/>
    <property type="molecule type" value="Genomic_DNA"/>
</dbReference>
<dbReference type="SMR" id="Q5NBM8"/>
<dbReference type="FunCoup" id="Q5NBM8">
    <property type="interactions" value="744"/>
</dbReference>
<dbReference type="STRING" id="39947.Q5NBM8"/>
<dbReference type="PaxDb" id="39947-Q5NBM8"/>
<dbReference type="GeneID" id="4325181"/>
<dbReference type="KEGG" id="dosa:Os01g0274800"/>
<dbReference type="KEGG" id="osa:4325181"/>
<dbReference type="eggNOG" id="KOG0048">
    <property type="taxonomic scope" value="Eukaryota"/>
</dbReference>
<dbReference type="HOGENOM" id="CLU_028567_18_1_1"/>
<dbReference type="InParanoid" id="Q5NBM8"/>
<dbReference type="OrthoDB" id="2143914at2759"/>
<dbReference type="Proteomes" id="UP000000763">
    <property type="component" value="Chromosome 1"/>
</dbReference>
<dbReference type="Proteomes" id="UP000059680">
    <property type="component" value="Chromosome 1"/>
</dbReference>
<dbReference type="GO" id="GO:0005634">
    <property type="term" value="C:nucleus"/>
    <property type="evidence" value="ECO:0000318"/>
    <property type="project" value="GO_Central"/>
</dbReference>
<dbReference type="GO" id="GO:0000981">
    <property type="term" value="F:DNA-binding transcription factor activity, RNA polymerase II-specific"/>
    <property type="evidence" value="ECO:0000318"/>
    <property type="project" value="GO_Central"/>
</dbReference>
<dbReference type="GO" id="GO:0000978">
    <property type="term" value="F:RNA polymerase II cis-regulatory region sequence-specific DNA binding"/>
    <property type="evidence" value="ECO:0000318"/>
    <property type="project" value="GO_Central"/>
</dbReference>
<dbReference type="GO" id="GO:0006355">
    <property type="term" value="P:regulation of DNA-templated transcription"/>
    <property type="evidence" value="ECO:0000318"/>
    <property type="project" value="GO_Central"/>
</dbReference>
<dbReference type="CDD" id="cd00167">
    <property type="entry name" value="SANT"/>
    <property type="match status" value="2"/>
</dbReference>
<dbReference type="FunFam" id="1.10.10.60:FF:000060">
    <property type="entry name" value="MYB transcription factor"/>
    <property type="match status" value="1"/>
</dbReference>
<dbReference type="FunFam" id="1.10.10.60:FF:000356">
    <property type="entry name" value="MYB transcription factor"/>
    <property type="match status" value="1"/>
</dbReference>
<dbReference type="Gene3D" id="1.10.10.60">
    <property type="entry name" value="Homeodomain-like"/>
    <property type="match status" value="2"/>
</dbReference>
<dbReference type="InterPro" id="IPR009057">
    <property type="entry name" value="Homeodomain-like_sf"/>
</dbReference>
<dbReference type="InterPro" id="IPR017930">
    <property type="entry name" value="Myb_dom"/>
</dbReference>
<dbReference type="InterPro" id="IPR050560">
    <property type="entry name" value="MYB_TF"/>
</dbReference>
<dbReference type="InterPro" id="IPR001005">
    <property type="entry name" value="SANT/Myb"/>
</dbReference>
<dbReference type="PANTHER" id="PTHR45614:SF259">
    <property type="entry name" value="MYB DOMAIN PROTEIN 89-RELATED"/>
    <property type="match status" value="1"/>
</dbReference>
<dbReference type="PANTHER" id="PTHR45614">
    <property type="entry name" value="MYB PROTEIN-RELATED"/>
    <property type="match status" value="1"/>
</dbReference>
<dbReference type="Pfam" id="PF13921">
    <property type="entry name" value="Myb_DNA-bind_6"/>
    <property type="match status" value="1"/>
</dbReference>
<dbReference type="SMART" id="SM00717">
    <property type="entry name" value="SANT"/>
    <property type="match status" value="2"/>
</dbReference>
<dbReference type="SUPFAM" id="SSF46689">
    <property type="entry name" value="Homeodomain-like"/>
    <property type="match status" value="1"/>
</dbReference>
<dbReference type="PROSITE" id="PS51294">
    <property type="entry name" value="HTH_MYB"/>
    <property type="match status" value="2"/>
</dbReference>
<feature type="chain" id="PRO_0000441043" description="Transcription factor CSA">
    <location>
        <begin position="1"/>
        <end position="338"/>
    </location>
</feature>
<feature type="domain" description="HTH myb-type 1" evidence="1">
    <location>
        <begin position="44"/>
        <end position="95"/>
    </location>
</feature>
<feature type="domain" description="HTH myb-type 2" evidence="1">
    <location>
        <begin position="96"/>
        <end position="150"/>
    </location>
</feature>
<feature type="DNA-binding region" description="H-T-H motif" evidence="1">
    <location>
        <begin position="72"/>
        <end position="94"/>
    </location>
</feature>
<feature type="DNA-binding region" description="H-T-H motif" evidence="1">
    <location>
        <begin position="123"/>
        <end position="146"/>
    </location>
</feature>
<feature type="region of interest" description="Disordered" evidence="2">
    <location>
        <begin position="1"/>
        <end position="25"/>
    </location>
</feature>
<feature type="region of interest" description="Disordered" evidence="2">
    <location>
        <begin position="150"/>
        <end position="184"/>
    </location>
</feature>
<feature type="region of interest" description="Disordered" evidence="2">
    <location>
        <begin position="298"/>
        <end position="322"/>
    </location>
</feature>
<feature type="compositionally biased region" description="Basic residues" evidence="2">
    <location>
        <begin position="150"/>
        <end position="162"/>
    </location>
</feature>
<feature type="compositionally biased region" description="Pro residues" evidence="2">
    <location>
        <begin position="170"/>
        <end position="181"/>
    </location>
</feature>
<protein>
    <recommendedName>
        <fullName evidence="6">Transcription factor CSA</fullName>
    </recommendedName>
    <alternativeName>
        <fullName evidence="6">Myb-related protein CSA</fullName>
    </alternativeName>
    <alternativeName>
        <fullName evidence="5">Protein CARBON STARVED ANTHER</fullName>
    </alternativeName>
</protein>
<gene>
    <name evidence="5" type="primary">CSA</name>
    <name evidence="9" type="ordered locus">Os01g0274800</name>
    <name evidence="6" type="ordered locus">LOC_Os01g16810</name>
    <name evidence="7" type="ORF">P0038F12.1</name>
    <name evidence="8" type="ORF">P0424A08.17</name>
</gene>
<proteinExistence type="evidence at transcript level"/>
<name>CSA_ORYSJ</name>
<comment type="function">
    <text evidence="3">Transcription factor required for sugar partitioning from leaves to anthers during male reproductive development. Required for the production of functional pollen grains. Binds to the promoter of the anther-specific sugar transporter MST8 and regulates its expression. Regulates the expression of genes involved in sugar partitioning in flower, such as the sugar transporter SUT3, the invertase INV4, the UDP-glucose pyrophosphorylase UGP2 and the starch synthase WAXY.</text>
</comment>
<comment type="subcellular location">
    <subcellularLocation>
        <location evidence="3">Nucleus</location>
    </subcellularLocation>
</comment>
<comment type="tissue specificity">
    <text evidence="3">Expressed in root vascular tissue, primordia of lateral roots, leaf collar, and veins of lemma, palea and pistil.</text>
</comment>
<comment type="developmental stage">
    <text evidence="3">During anther development, expressed in anther vacuolar tissue from stage 9 to stage 13.</text>
</comment>
<comment type="induction">
    <text evidence="3">Induced by wounding.</text>
</comment>
<comment type="disruption phenotype">
    <text evidence="3 4">Reduced plant size, and reduced levels of sugars in anthers leading to defective anthers and male sterility when grown under short day (12 hours light) conditions (PubMed:20305120, PubMed:23256151). No male sterility phenotype when grown under long day (14 hours light) conditions (PubMed:23256151).</text>
</comment>
<comment type="sequence caution" evidence="6">
    <conflict type="erroneous gene model prediction">
        <sequence resource="EMBL-CDS" id="BAD81105"/>
    </conflict>
</comment>
<comment type="sequence caution" evidence="6">
    <conflict type="erroneous gene model prediction">
        <sequence resource="EMBL-CDS" id="BAD81128"/>
    </conflict>
</comment>
<comment type="sequence caution" evidence="6">
    <conflict type="erroneous gene model prediction">
        <sequence resource="EMBL-CDS" id="BAF04634"/>
    </conflict>
</comment>
<comment type="sequence caution" evidence="6">
    <conflict type="erroneous gene model prediction">
        <sequence resource="EMBL-CDS" id="BAS71534"/>
    </conflict>
</comment>
<sequence>MAHEMMGGFFGHPPPPPATAAVGEEEDEVVEETEEGGHGGGVQGKLCARGHWRPAEDAKLKDLVAQYGPQNWNLIAEKLDGRSGKSCRLRWFNQLDPRINRRAFTEEEEERLMAAHRAYGNKWALIARLFPGRTDNAVKNHWHVLMARRHREQSGAFRRRKPSSSSASPAPAPAPPPPPQPVVALHHHHHRYSQQYSGYSGAAESDESASTCTTDLSLSSGSAAAAAAAAAAANIPCCFYQSTPRASSSSTAACRAPRVAAAADTVAFFPGAGYDFAAAPHAMAPAAASTFAPSARSAFSAPAGRGEPPGAVDQRGGAQATTDSHTIPFFDFLGVGAT</sequence>